<proteinExistence type="evidence at protein level"/>
<name>HXT15_YEAST</name>
<organism>
    <name type="scientific">Saccharomyces cerevisiae (strain ATCC 204508 / S288c)</name>
    <name type="common">Baker's yeast</name>
    <dbReference type="NCBI Taxonomy" id="559292"/>
    <lineage>
        <taxon>Eukaryota</taxon>
        <taxon>Fungi</taxon>
        <taxon>Dikarya</taxon>
        <taxon>Ascomycota</taxon>
        <taxon>Saccharomycotina</taxon>
        <taxon>Saccharomycetes</taxon>
        <taxon>Saccharomycetales</taxon>
        <taxon>Saccharomycetaceae</taxon>
        <taxon>Saccharomyces</taxon>
    </lineage>
</organism>
<feature type="chain" id="PRO_0000050404" description="Hexose transporter HXT15">
    <location>
        <begin position="1"/>
        <end position="567"/>
    </location>
</feature>
<feature type="topological domain" description="Cytoplasmic" evidence="1">
    <location>
        <begin position="1"/>
        <end position="55"/>
    </location>
</feature>
<feature type="transmembrane region" description="Helical; Name=1" evidence="1">
    <location>
        <begin position="56"/>
        <end position="76"/>
    </location>
</feature>
<feature type="topological domain" description="Extracellular" evidence="1">
    <location>
        <begin position="77"/>
        <end position="112"/>
    </location>
</feature>
<feature type="transmembrane region" description="Helical; Name=2" evidence="1">
    <location>
        <begin position="113"/>
        <end position="133"/>
    </location>
</feature>
<feature type="topological domain" description="Cytoplasmic" evidence="1">
    <location>
        <begin position="134"/>
        <end position="139"/>
    </location>
</feature>
<feature type="transmembrane region" description="Helical; Name=3" evidence="1">
    <location>
        <begin position="140"/>
        <end position="160"/>
    </location>
</feature>
<feature type="topological domain" description="Extracellular" evidence="1">
    <location>
        <begin position="161"/>
        <end position="170"/>
    </location>
</feature>
<feature type="transmembrane region" description="Helical; Name=4" evidence="1">
    <location>
        <begin position="171"/>
        <end position="191"/>
    </location>
</feature>
<feature type="topological domain" description="Cytoplasmic" evidence="1">
    <location>
        <begin position="192"/>
        <end position="197"/>
    </location>
</feature>
<feature type="transmembrane region" description="Helical; Name=5" evidence="1">
    <location>
        <begin position="198"/>
        <end position="218"/>
    </location>
</feature>
<feature type="topological domain" description="Extracellular" evidence="1">
    <location>
        <begin position="219"/>
        <end position="232"/>
    </location>
</feature>
<feature type="transmembrane region" description="Helical; Name=6" evidence="1">
    <location>
        <begin position="233"/>
        <end position="253"/>
    </location>
</feature>
<feature type="topological domain" description="Cytoplasmic" evidence="1">
    <location>
        <begin position="254"/>
        <end position="336"/>
    </location>
</feature>
<feature type="transmembrane region" description="Helical; Name=7" evidence="1">
    <location>
        <begin position="337"/>
        <end position="353"/>
    </location>
</feature>
<feature type="topological domain" description="Extracellular" evidence="1">
    <location>
        <begin position="354"/>
        <end position="359"/>
    </location>
</feature>
<feature type="transmembrane region" description="Helical; Name=8" evidence="1">
    <location>
        <begin position="360"/>
        <end position="377"/>
    </location>
</feature>
<feature type="topological domain" description="Cytoplasmic" evidence="1">
    <location>
        <begin position="378"/>
        <end position="384"/>
    </location>
</feature>
<feature type="transmembrane region" description="Helical; Name=9" evidence="1">
    <location>
        <begin position="385"/>
        <end position="405"/>
    </location>
</feature>
<feature type="topological domain" description="Extracellular" evidence="1">
    <location>
        <begin position="406"/>
        <end position="427"/>
    </location>
</feature>
<feature type="transmembrane region" description="Helical; Name=10" evidence="1">
    <location>
        <begin position="428"/>
        <end position="448"/>
    </location>
</feature>
<feature type="topological domain" description="Cytoplasmic" evidence="1">
    <location>
        <begin position="449"/>
        <end position="465"/>
    </location>
</feature>
<feature type="transmembrane region" description="Helical; Name=11" evidence="1">
    <location>
        <begin position="466"/>
        <end position="486"/>
    </location>
</feature>
<feature type="topological domain" description="Extracellular" evidence="1">
    <location>
        <position position="487"/>
    </location>
</feature>
<feature type="transmembrane region" description="Helical; Name=12" evidence="1">
    <location>
        <begin position="488"/>
        <end position="508"/>
    </location>
</feature>
<feature type="topological domain" description="Cytoplasmic" evidence="1">
    <location>
        <begin position="509"/>
        <end position="567"/>
    </location>
</feature>
<feature type="region of interest" description="Disordered" evidence="2">
    <location>
        <begin position="1"/>
        <end position="32"/>
    </location>
</feature>
<feature type="region of interest" description="Disordered" evidence="2">
    <location>
        <begin position="533"/>
        <end position="555"/>
    </location>
</feature>
<feature type="compositionally biased region" description="Polar residues" evidence="2">
    <location>
        <begin position="1"/>
        <end position="19"/>
    </location>
</feature>
<feature type="compositionally biased region" description="Basic and acidic residues" evidence="2">
    <location>
        <begin position="545"/>
        <end position="555"/>
    </location>
</feature>
<keyword id="KW-0472">Membrane</keyword>
<keyword id="KW-1185">Reference proteome</keyword>
<keyword id="KW-0677">Repeat</keyword>
<keyword id="KW-0762">Sugar transport</keyword>
<keyword id="KW-0812">Transmembrane</keyword>
<keyword id="KW-1133">Transmembrane helix</keyword>
<keyword id="KW-0813">Transport</keyword>
<comment type="function">
    <text>Probable glucose transporter.</text>
</comment>
<comment type="subcellular location">
    <subcellularLocation>
        <location>Membrane</location>
        <topology>Multi-pass membrane protein</topology>
    </subcellularLocation>
</comment>
<comment type="similarity">
    <text evidence="3">Belongs to the major facilitator superfamily. Sugar transporter (TC 2.A.1.1) family.</text>
</comment>
<evidence type="ECO:0000255" key="1"/>
<evidence type="ECO:0000256" key="2">
    <source>
        <dbReference type="SAM" id="MobiDB-lite"/>
    </source>
</evidence>
<evidence type="ECO:0000305" key="3"/>
<gene>
    <name type="primary">HXT15</name>
    <name type="ordered locus">YDL245C</name>
</gene>
<protein>
    <recommendedName>
        <fullName>Hexose transporter HXT15</fullName>
    </recommendedName>
</protein>
<accession>P54854</accession>
<accession>D6VRB2</accession>
<dbReference type="EMBL" id="X92891">
    <property type="protein sequence ID" value="CAA63484.1"/>
    <property type="molecule type" value="Genomic_DNA"/>
</dbReference>
<dbReference type="EMBL" id="Z74293">
    <property type="protein sequence ID" value="CAA98825.1"/>
    <property type="molecule type" value="Genomic_DNA"/>
</dbReference>
<dbReference type="EMBL" id="BK006938">
    <property type="protein sequence ID" value="DAA11622.1"/>
    <property type="molecule type" value="Genomic_DNA"/>
</dbReference>
<dbReference type="PIR" id="S67809">
    <property type="entry name" value="S67809"/>
</dbReference>
<dbReference type="RefSeq" id="NP_010036.1">
    <property type="nucleotide sequence ID" value="NM_001180305.1"/>
</dbReference>
<dbReference type="SMR" id="P54854"/>
<dbReference type="BioGRID" id="31867">
    <property type="interactions" value="33"/>
</dbReference>
<dbReference type="DIP" id="DIP-7210N"/>
<dbReference type="FunCoup" id="P54854">
    <property type="interactions" value="1486"/>
</dbReference>
<dbReference type="IntAct" id="P54854">
    <property type="interactions" value="2"/>
</dbReference>
<dbReference type="MINT" id="P54854"/>
<dbReference type="STRING" id="4932.YDL245C"/>
<dbReference type="TCDB" id="2.A.1.1.107">
    <property type="family name" value="the major facilitator superfamily (mfs)"/>
</dbReference>
<dbReference type="iPTMnet" id="P54854"/>
<dbReference type="PaxDb" id="4932-YDL245C"/>
<dbReference type="PeptideAtlas" id="P54854"/>
<dbReference type="EnsemblFungi" id="YDL245C_mRNA">
    <property type="protein sequence ID" value="YDL245C"/>
    <property type="gene ID" value="YDL245C"/>
</dbReference>
<dbReference type="GeneID" id="851352"/>
<dbReference type="KEGG" id="sce:YDL245C"/>
<dbReference type="AGR" id="SGD:S000002404"/>
<dbReference type="SGD" id="S000002404">
    <property type="gene designation" value="HXT15"/>
</dbReference>
<dbReference type="VEuPathDB" id="FungiDB:YDL245C"/>
<dbReference type="eggNOG" id="KOG0254">
    <property type="taxonomic scope" value="Eukaryota"/>
</dbReference>
<dbReference type="GeneTree" id="ENSGT00940000176280"/>
<dbReference type="HOGENOM" id="CLU_001265_30_1_1"/>
<dbReference type="InParanoid" id="P54854"/>
<dbReference type="OMA" id="TYVLGKW"/>
<dbReference type="OrthoDB" id="4040821at2759"/>
<dbReference type="BioCyc" id="YEAST:G3O-29620-MONOMER"/>
<dbReference type="PRO" id="PR:P54854"/>
<dbReference type="Proteomes" id="UP000002311">
    <property type="component" value="Chromosome IV"/>
</dbReference>
<dbReference type="RNAct" id="P54854">
    <property type="molecule type" value="protein"/>
</dbReference>
<dbReference type="GO" id="GO:0071944">
    <property type="term" value="C:cell periphery"/>
    <property type="evidence" value="ECO:0007005"/>
    <property type="project" value="SGD"/>
</dbReference>
<dbReference type="GO" id="GO:0005886">
    <property type="term" value="C:plasma membrane"/>
    <property type="evidence" value="ECO:0000318"/>
    <property type="project" value="GO_Central"/>
</dbReference>
<dbReference type="GO" id="GO:0005351">
    <property type="term" value="F:carbohydrate:proton symporter activity"/>
    <property type="evidence" value="ECO:0000318"/>
    <property type="project" value="GO_Central"/>
</dbReference>
<dbReference type="GO" id="GO:0055056">
    <property type="term" value="F:D-glucose transmembrane transporter activity"/>
    <property type="evidence" value="ECO:0000315"/>
    <property type="project" value="SGD"/>
</dbReference>
<dbReference type="GO" id="GO:0005353">
    <property type="term" value="F:fructose transmembrane transporter activity"/>
    <property type="evidence" value="ECO:0000315"/>
    <property type="project" value="SGD"/>
</dbReference>
<dbReference type="GO" id="GO:0015578">
    <property type="term" value="F:mannose transmembrane transporter activity"/>
    <property type="evidence" value="ECO:0000315"/>
    <property type="project" value="SGD"/>
</dbReference>
<dbReference type="GO" id="GO:0008643">
    <property type="term" value="P:carbohydrate transport"/>
    <property type="evidence" value="ECO:0000318"/>
    <property type="project" value="GO_Central"/>
</dbReference>
<dbReference type="GO" id="GO:0008645">
    <property type="term" value="P:hexose transmembrane transport"/>
    <property type="evidence" value="ECO:0000315"/>
    <property type="project" value="SGD"/>
</dbReference>
<dbReference type="GO" id="GO:0015797">
    <property type="term" value="P:mannitol transmembrane transport"/>
    <property type="evidence" value="ECO:0000316"/>
    <property type="project" value="SGD"/>
</dbReference>
<dbReference type="GO" id="GO:0015795">
    <property type="term" value="P:sorbitol transmembrane transport"/>
    <property type="evidence" value="ECO:0000316"/>
    <property type="project" value="SGD"/>
</dbReference>
<dbReference type="GO" id="GO:1902341">
    <property type="term" value="P:xylitol transmembrane transport"/>
    <property type="evidence" value="ECO:0000316"/>
    <property type="project" value="SGD"/>
</dbReference>
<dbReference type="CDD" id="cd17356">
    <property type="entry name" value="MFS_HXT"/>
    <property type="match status" value="1"/>
</dbReference>
<dbReference type="FunFam" id="1.20.1250.20:FF:000044">
    <property type="entry name" value="Hexose transporter Hxt3p"/>
    <property type="match status" value="1"/>
</dbReference>
<dbReference type="Gene3D" id="1.20.1250.20">
    <property type="entry name" value="MFS general substrate transporter like domains"/>
    <property type="match status" value="1"/>
</dbReference>
<dbReference type="InterPro" id="IPR020846">
    <property type="entry name" value="MFS_dom"/>
</dbReference>
<dbReference type="InterPro" id="IPR005828">
    <property type="entry name" value="MFS_sugar_transport-like"/>
</dbReference>
<dbReference type="InterPro" id="IPR050360">
    <property type="entry name" value="MFS_Sugar_Transporters"/>
</dbReference>
<dbReference type="InterPro" id="IPR036259">
    <property type="entry name" value="MFS_trans_sf"/>
</dbReference>
<dbReference type="InterPro" id="IPR003663">
    <property type="entry name" value="Sugar/inositol_transpt"/>
</dbReference>
<dbReference type="InterPro" id="IPR005829">
    <property type="entry name" value="Sugar_transporter_CS"/>
</dbReference>
<dbReference type="NCBIfam" id="TIGR00879">
    <property type="entry name" value="SP"/>
    <property type="match status" value="1"/>
</dbReference>
<dbReference type="PANTHER" id="PTHR48022:SF75">
    <property type="entry name" value="GALACTOSE TRANSPORTER-RELATED"/>
    <property type="match status" value="1"/>
</dbReference>
<dbReference type="PANTHER" id="PTHR48022">
    <property type="entry name" value="PLASTIDIC GLUCOSE TRANSPORTER 4"/>
    <property type="match status" value="1"/>
</dbReference>
<dbReference type="Pfam" id="PF00083">
    <property type="entry name" value="Sugar_tr"/>
    <property type="match status" value="1"/>
</dbReference>
<dbReference type="PRINTS" id="PR00171">
    <property type="entry name" value="SUGRTRNSPORT"/>
</dbReference>
<dbReference type="SUPFAM" id="SSF103473">
    <property type="entry name" value="MFS general substrate transporter"/>
    <property type="match status" value="1"/>
</dbReference>
<dbReference type="PROSITE" id="PS50850">
    <property type="entry name" value="MFS"/>
    <property type="match status" value="1"/>
</dbReference>
<dbReference type="PROSITE" id="PS00216">
    <property type="entry name" value="SUGAR_TRANSPORT_1"/>
    <property type="match status" value="1"/>
</dbReference>
<dbReference type="PROSITE" id="PS00217">
    <property type="entry name" value="SUGAR_TRANSPORT_2"/>
    <property type="match status" value="1"/>
</dbReference>
<reference key="1">
    <citation type="journal article" date="1996" name="Yeast">
        <title>Sequencing analysis of a 4.1 kb subtelomeric region from yeast chromosome IV identifies HXT15, a new member of the hexose transporter family.</title>
        <authorList>
            <person name="Bargues M."/>
            <person name="Salom D."/>
            <person name="Gomez A."/>
            <person name="Paricio N."/>
            <person name="Perez-Alonso M."/>
            <person name="Perez-Otin J.E."/>
        </authorList>
    </citation>
    <scope>NUCLEOTIDE SEQUENCE [GENOMIC DNA]</scope>
    <source>
        <strain>ATCC 204508 / S288c</strain>
    </source>
</reference>
<reference key="2">
    <citation type="journal article" date="1997" name="Nature">
        <title>The nucleotide sequence of Saccharomyces cerevisiae chromosome IV.</title>
        <authorList>
            <person name="Jacq C."/>
            <person name="Alt-Moerbe J."/>
            <person name="Andre B."/>
            <person name="Arnold W."/>
            <person name="Bahr A."/>
            <person name="Ballesta J.P.G."/>
            <person name="Bargues M."/>
            <person name="Baron L."/>
            <person name="Becker A."/>
            <person name="Biteau N."/>
            <person name="Bloecker H."/>
            <person name="Blugeon C."/>
            <person name="Boskovic J."/>
            <person name="Brandt P."/>
            <person name="Brueckner M."/>
            <person name="Buitrago M.J."/>
            <person name="Coster F."/>
            <person name="Delaveau T."/>
            <person name="del Rey F."/>
            <person name="Dujon B."/>
            <person name="Eide L.G."/>
            <person name="Garcia-Cantalejo J.M."/>
            <person name="Goffeau A."/>
            <person name="Gomez-Peris A."/>
            <person name="Granotier C."/>
            <person name="Hanemann V."/>
            <person name="Hankeln T."/>
            <person name="Hoheisel J.D."/>
            <person name="Jaeger W."/>
            <person name="Jimenez A."/>
            <person name="Jonniaux J.-L."/>
            <person name="Kraemer C."/>
            <person name="Kuester H."/>
            <person name="Laamanen P."/>
            <person name="Legros Y."/>
            <person name="Louis E.J."/>
            <person name="Moeller-Rieker S."/>
            <person name="Monnet A."/>
            <person name="Moro M."/>
            <person name="Mueller-Auer S."/>
            <person name="Nussbaumer B."/>
            <person name="Paricio N."/>
            <person name="Paulin L."/>
            <person name="Perea J."/>
            <person name="Perez-Alonso M."/>
            <person name="Perez-Ortin J.E."/>
            <person name="Pohl T.M."/>
            <person name="Prydz H."/>
            <person name="Purnelle B."/>
            <person name="Rasmussen S.W."/>
            <person name="Remacha M.A."/>
            <person name="Revuelta J.L."/>
            <person name="Rieger M."/>
            <person name="Salom D."/>
            <person name="Saluz H.P."/>
            <person name="Saiz J.E."/>
            <person name="Saren A.-M."/>
            <person name="Schaefer M."/>
            <person name="Scharfe M."/>
            <person name="Schmidt E.R."/>
            <person name="Schneider C."/>
            <person name="Scholler P."/>
            <person name="Schwarz S."/>
            <person name="Soler-Mira A."/>
            <person name="Urrestarazu L.A."/>
            <person name="Verhasselt P."/>
            <person name="Vissers S."/>
            <person name="Voet M."/>
            <person name="Volckaert G."/>
            <person name="Wagner G."/>
            <person name="Wambutt R."/>
            <person name="Wedler E."/>
            <person name="Wedler H."/>
            <person name="Woelfl S."/>
            <person name="Harris D.E."/>
            <person name="Bowman S."/>
            <person name="Brown D."/>
            <person name="Churcher C.M."/>
            <person name="Connor R."/>
            <person name="Dedman K."/>
            <person name="Gentles S."/>
            <person name="Hamlin N."/>
            <person name="Hunt S."/>
            <person name="Jones L."/>
            <person name="McDonald S."/>
            <person name="Murphy L.D."/>
            <person name="Niblett D."/>
            <person name="Odell C."/>
            <person name="Oliver K."/>
            <person name="Rajandream M.A."/>
            <person name="Richards C."/>
            <person name="Shore L."/>
            <person name="Walsh S.V."/>
            <person name="Barrell B.G."/>
            <person name="Dietrich F.S."/>
            <person name="Mulligan J.T."/>
            <person name="Allen E."/>
            <person name="Araujo R."/>
            <person name="Aviles E."/>
            <person name="Berno A."/>
            <person name="Carpenter J."/>
            <person name="Chen E."/>
            <person name="Cherry J.M."/>
            <person name="Chung E."/>
            <person name="Duncan M."/>
            <person name="Hunicke-Smith S."/>
            <person name="Hyman R.W."/>
            <person name="Komp C."/>
            <person name="Lashkari D."/>
            <person name="Lew H."/>
            <person name="Lin D."/>
            <person name="Mosedale D."/>
            <person name="Nakahara K."/>
            <person name="Namath A."/>
            <person name="Oefner P."/>
            <person name="Oh C."/>
            <person name="Petel F.X."/>
            <person name="Roberts D."/>
            <person name="Schramm S."/>
            <person name="Schroeder M."/>
            <person name="Shogren T."/>
            <person name="Shroff N."/>
            <person name="Winant A."/>
            <person name="Yelton M.A."/>
            <person name="Botstein D."/>
            <person name="Davis R.W."/>
            <person name="Johnston M."/>
            <person name="Andrews S."/>
            <person name="Brinkman R."/>
            <person name="Cooper J."/>
            <person name="Ding H."/>
            <person name="Du Z."/>
            <person name="Favello A."/>
            <person name="Fulton L."/>
            <person name="Gattung S."/>
            <person name="Greco T."/>
            <person name="Hallsworth K."/>
            <person name="Hawkins J."/>
            <person name="Hillier L.W."/>
            <person name="Jier M."/>
            <person name="Johnson D."/>
            <person name="Johnston L."/>
            <person name="Kirsten J."/>
            <person name="Kucaba T."/>
            <person name="Langston Y."/>
            <person name="Latreille P."/>
            <person name="Le T."/>
            <person name="Mardis E."/>
            <person name="Menezes S."/>
            <person name="Miller N."/>
            <person name="Nhan M."/>
            <person name="Pauley A."/>
            <person name="Peluso D."/>
            <person name="Rifkin L."/>
            <person name="Riles L."/>
            <person name="Taich A."/>
            <person name="Trevaskis E."/>
            <person name="Vignati D."/>
            <person name="Wilcox L."/>
            <person name="Wohldman P."/>
            <person name="Vaudin M."/>
            <person name="Wilson R."/>
            <person name="Waterston R."/>
            <person name="Albermann K."/>
            <person name="Hani J."/>
            <person name="Heumann K."/>
            <person name="Kleine K."/>
            <person name="Mewes H.-W."/>
            <person name="Zollner A."/>
            <person name="Zaccaria P."/>
        </authorList>
    </citation>
    <scope>NUCLEOTIDE SEQUENCE [LARGE SCALE GENOMIC DNA]</scope>
    <source>
        <strain>ATCC 204508 / S288c</strain>
    </source>
</reference>
<reference key="3">
    <citation type="journal article" date="2014" name="G3 (Bethesda)">
        <title>The reference genome sequence of Saccharomyces cerevisiae: Then and now.</title>
        <authorList>
            <person name="Engel S.R."/>
            <person name="Dietrich F.S."/>
            <person name="Fisk D.G."/>
            <person name="Binkley G."/>
            <person name="Balakrishnan R."/>
            <person name="Costanzo M.C."/>
            <person name="Dwight S.S."/>
            <person name="Hitz B.C."/>
            <person name="Karra K."/>
            <person name="Nash R.S."/>
            <person name="Weng S."/>
            <person name="Wong E.D."/>
            <person name="Lloyd P."/>
            <person name="Skrzypek M.S."/>
            <person name="Miyasato S.R."/>
            <person name="Simison M."/>
            <person name="Cherry J.M."/>
        </authorList>
    </citation>
    <scope>GENOME REANNOTATION</scope>
    <source>
        <strain>ATCC 204508 / S288c</strain>
    </source>
</reference>
<reference key="4">
    <citation type="journal article" date="2006" name="Proc. Natl. Acad. Sci. U.S.A.">
        <title>A global topology map of the Saccharomyces cerevisiae membrane proteome.</title>
        <authorList>
            <person name="Kim H."/>
            <person name="Melen K."/>
            <person name="Oesterberg M."/>
            <person name="von Heijne G."/>
        </authorList>
    </citation>
    <scope>TOPOLOGY [LARGE SCALE ANALYSIS]</scope>
    <source>
        <strain>ATCC 208353 / W303-1A</strain>
    </source>
</reference>
<sequence>MASEQSSPEINADNLNSSAADVHVQPPGEKEWSDGFYDKEVINGNTPDAPKRGFLGYLIIYLLCYPVSFGGFLPGWDSGITAGFINMDNFKMNFGSYKHSTGEYYLSNVRMGLLVAMFSVGCSIGGVAFARLADTLGRRLAIVIVVLVYMVGAIIQISSNHKWYQYFVGKIIYGLGAGGCSVLCPMLLSEIAPTDLRGGLVSLYQLNMTFGIFLGYCSVYGTRKYSNTAQWRIPVGLCFLWALIIIVGMLLVPESPRYLIECERHEEACVSIAKINKVSPEDPWVLKQADEINAGVLAQRELGEASWKELFSVKTKVLQRLITGILVQTFLQLTGENYFFFYGTTIFKSVGLTDGFETSIVLGTVNFFSTIIAVMVVDKIGRRKCLLFGAASMMACMVIFASIGVKCLYPHGQDGPSSKGAGNAMIVFTCFYIFCFATTWAPVAYIVVAESFPSKVKSKAMSISTAFNWLWQFLIGFFTPFITGSIHFYYGYVFVGCLVAMFLYVFFFLPETIGLSLEEIQLLYEEGIKPWKSASWVPPSRRGASSRETEAKKKSWKEVLKFPKSFN</sequence>